<comment type="function">
    <text evidence="1">Catalyzes the interconversion of beta-pyran and beta-furan forms of D-ribose.</text>
</comment>
<comment type="catalytic activity">
    <reaction evidence="1">
        <text>beta-D-ribopyranose = beta-D-ribofuranose</text>
        <dbReference type="Rhea" id="RHEA:25432"/>
        <dbReference type="ChEBI" id="CHEBI:27476"/>
        <dbReference type="ChEBI" id="CHEBI:47002"/>
        <dbReference type="EC" id="5.4.99.62"/>
    </reaction>
</comment>
<comment type="pathway">
    <text evidence="1">Carbohydrate metabolism; D-ribose degradation; D-ribose 5-phosphate from beta-D-ribopyranose: step 1/2.</text>
</comment>
<comment type="subunit">
    <text evidence="1">Homodecamer.</text>
</comment>
<comment type="subcellular location">
    <subcellularLocation>
        <location evidence="1">Cytoplasm</location>
    </subcellularLocation>
</comment>
<comment type="similarity">
    <text evidence="1">Belongs to the RbsD / FucU family. RbsD subfamily.</text>
</comment>
<dbReference type="EC" id="5.4.99.62" evidence="1"/>
<dbReference type="EMBL" id="CP000800">
    <property type="protein sequence ID" value="ABV20889.1"/>
    <property type="molecule type" value="Genomic_DNA"/>
</dbReference>
<dbReference type="RefSeq" id="WP_001297694.1">
    <property type="nucleotide sequence ID" value="NC_009801.1"/>
</dbReference>
<dbReference type="SMR" id="A7ZTV9"/>
<dbReference type="GeneID" id="75205466"/>
<dbReference type="KEGG" id="ecw:EcE24377A_4264"/>
<dbReference type="HOGENOM" id="CLU_135498_0_0_6"/>
<dbReference type="UniPathway" id="UPA00916">
    <property type="reaction ID" value="UER00888"/>
</dbReference>
<dbReference type="Proteomes" id="UP000001122">
    <property type="component" value="Chromosome"/>
</dbReference>
<dbReference type="GO" id="GO:0005829">
    <property type="term" value="C:cytosol"/>
    <property type="evidence" value="ECO:0007669"/>
    <property type="project" value="TreeGrafter"/>
</dbReference>
<dbReference type="GO" id="GO:0062193">
    <property type="term" value="F:D-ribose pyranase activity"/>
    <property type="evidence" value="ECO:0007669"/>
    <property type="project" value="UniProtKB-EC"/>
</dbReference>
<dbReference type="GO" id="GO:0016872">
    <property type="term" value="F:intramolecular lyase activity"/>
    <property type="evidence" value="ECO:0007669"/>
    <property type="project" value="UniProtKB-UniRule"/>
</dbReference>
<dbReference type="GO" id="GO:0048029">
    <property type="term" value="F:monosaccharide binding"/>
    <property type="evidence" value="ECO:0007669"/>
    <property type="project" value="InterPro"/>
</dbReference>
<dbReference type="GO" id="GO:0019303">
    <property type="term" value="P:D-ribose catabolic process"/>
    <property type="evidence" value="ECO:0007669"/>
    <property type="project" value="UniProtKB-UniRule"/>
</dbReference>
<dbReference type="FunFam" id="3.40.1650.10:FF:000002">
    <property type="entry name" value="D-ribose pyranase"/>
    <property type="match status" value="1"/>
</dbReference>
<dbReference type="Gene3D" id="3.40.1650.10">
    <property type="entry name" value="RbsD-like domain"/>
    <property type="match status" value="1"/>
</dbReference>
<dbReference type="HAMAP" id="MF_01661">
    <property type="entry name" value="D_rib_pyranase"/>
    <property type="match status" value="1"/>
</dbReference>
<dbReference type="InterPro" id="IPR023064">
    <property type="entry name" value="D-ribose_pyranase"/>
</dbReference>
<dbReference type="InterPro" id="IPR023750">
    <property type="entry name" value="RbsD-like_sf"/>
</dbReference>
<dbReference type="InterPro" id="IPR007721">
    <property type="entry name" value="RbsD_FucU"/>
</dbReference>
<dbReference type="NCBIfam" id="NF008761">
    <property type="entry name" value="PRK11797.1"/>
    <property type="match status" value="1"/>
</dbReference>
<dbReference type="PANTHER" id="PTHR37831">
    <property type="entry name" value="D-RIBOSE PYRANASE"/>
    <property type="match status" value="1"/>
</dbReference>
<dbReference type="PANTHER" id="PTHR37831:SF1">
    <property type="entry name" value="D-RIBOSE PYRANASE"/>
    <property type="match status" value="1"/>
</dbReference>
<dbReference type="Pfam" id="PF05025">
    <property type="entry name" value="RbsD_FucU"/>
    <property type="match status" value="1"/>
</dbReference>
<dbReference type="SUPFAM" id="SSF102546">
    <property type="entry name" value="RbsD-like"/>
    <property type="match status" value="1"/>
</dbReference>
<keyword id="KW-0119">Carbohydrate metabolism</keyword>
<keyword id="KW-0963">Cytoplasm</keyword>
<keyword id="KW-0413">Isomerase</keyword>
<keyword id="KW-1185">Reference proteome</keyword>
<protein>
    <recommendedName>
        <fullName evidence="1">D-ribose pyranase</fullName>
        <ecNumber evidence="1">5.4.99.62</ecNumber>
    </recommendedName>
</protein>
<reference key="1">
    <citation type="journal article" date="2008" name="J. Bacteriol.">
        <title>The pangenome structure of Escherichia coli: comparative genomic analysis of E. coli commensal and pathogenic isolates.</title>
        <authorList>
            <person name="Rasko D.A."/>
            <person name="Rosovitz M.J."/>
            <person name="Myers G.S.A."/>
            <person name="Mongodin E.F."/>
            <person name="Fricke W.F."/>
            <person name="Gajer P."/>
            <person name="Crabtree J."/>
            <person name="Sebaihia M."/>
            <person name="Thomson N.R."/>
            <person name="Chaudhuri R."/>
            <person name="Henderson I.R."/>
            <person name="Sperandio V."/>
            <person name="Ravel J."/>
        </authorList>
    </citation>
    <scope>NUCLEOTIDE SEQUENCE [LARGE SCALE GENOMIC DNA]</scope>
    <source>
        <strain>E24377A / ETEC</strain>
    </source>
</reference>
<proteinExistence type="inferred from homology"/>
<organism>
    <name type="scientific">Escherichia coli O139:H28 (strain E24377A / ETEC)</name>
    <dbReference type="NCBI Taxonomy" id="331111"/>
    <lineage>
        <taxon>Bacteria</taxon>
        <taxon>Pseudomonadati</taxon>
        <taxon>Pseudomonadota</taxon>
        <taxon>Gammaproteobacteria</taxon>
        <taxon>Enterobacterales</taxon>
        <taxon>Enterobacteriaceae</taxon>
        <taxon>Escherichia</taxon>
    </lineage>
</organism>
<accession>A7ZTV9</accession>
<evidence type="ECO:0000255" key="1">
    <source>
        <dbReference type="HAMAP-Rule" id="MF_01661"/>
    </source>
</evidence>
<gene>
    <name evidence="1" type="primary">rbsD</name>
    <name type="ordered locus">EcE24377A_4264</name>
</gene>
<name>RBSD_ECO24</name>
<feature type="chain" id="PRO_0000346200" description="D-ribose pyranase">
    <location>
        <begin position="1"/>
        <end position="139"/>
    </location>
</feature>
<feature type="active site" description="Proton donor" evidence="1">
    <location>
        <position position="20"/>
    </location>
</feature>
<feature type="binding site" evidence="1">
    <location>
        <position position="28"/>
    </location>
    <ligand>
        <name>substrate</name>
    </ligand>
</feature>
<feature type="binding site" evidence="1">
    <location>
        <position position="106"/>
    </location>
    <ligand>
        <name>substrate</name>
    </ligand>
</feature>
<feature type="binding site" evidence="1">
    <location>
        <begin position="128"/>
        <end position="130"/>
    </location>
    <ligand>
        <name>substrate</name>
    </ligand>
</feature>
<sequence length="139" mass="15316">MKKGTVLNSDISSMISRLGHTDTLVVCDAGLPIPKSTTRIDMALTQGVPSFMQVLGVVTNEMQVEAAIIAEEIKQHNPQLHETLLTHLEQLQKHQGNTIEIRYTTHEQFKQQTAESQAVIRSGECSPYANIILCAGVTF</sequence>